<reference key="1">
    <citation type="submission" date="2007-09" db="EMBL/GenBank/DDBJ databases">
        <title>Complete genome sequencing of Rickettsia bellii.</title>
        <authorList>
            <person name="Madan A."/>
            <person name="Lee H."/>
            <person name="Madan A."/>
            <person name="Yoon J.-G."/>
            <person name="Ryu G.-Y."/>
            <person name="Dasch G."/>
            <person name="Ereemeva M."/>
        </authorList>
    </citation>
    <scope>NUCLEOTIDE SEQUENCE [LARGE SCALE GENOMIC DNA]</scope>
    <source>
        <strain>OSU 85-389</strain>
    </source>
</reference>
<dbReference type="EC" id="1.17.1.8" evidence="1"/>
<dbReference type="EMBL" id="CP000849">
    <property type="protein sequence ID" value="ABV78713.1"/>
    <property type="molecule type" value="Genomic_DNA"/>
</dbReference>
<dbReference type="SMR" id="A8GV42"/>
<dbReference type="KEGG" id="rbo:A1I_01615"/>
<dbReference type="HOGENOM" id="CLU_047479_2_1_5"/>
<dbReference type="UniPathway" id="UPA00034">
    <property type="reaction ID" value="UER00018"/>
</dbReference>
<dbReference type="GO" id="GO:0005829">
    <property type="term" value="C:cytosol"/>
    <property type="evidence" value="ECO:0007669"/>
    <property type="project" value="TreeGrafter"/>
</dbReference>
<dbReference type="GO" id="GO:0008839">
    <property type="term" value="F:4-hydroxy-tetrahydrodipicolinate reductase"/>
    <property type="evidence" value="ECO:0007669"/>
    <property type="project" value="UniProtKB-EC"/>
</dbReference>
<dbReference type="GO" id="GO:0051287">
    <property type="term" value="F:NAD binding"/>
    <property type="evidence" value="ECO:0007669"/>
    <property type="project" value="UniProtKB-UniRule"/>
</dbReference>
<dbReference type="GO" id="GO:0050661">
    <property type="term" value="F:NADP binding"/>
    <property type="evidence" value="ECO:0007669"/>
    <property type="project" value="UniProtKB-UniRule"/>
</dbReference>
<dbReference type="GO" id="GO:0016726">
    <property type="term" value="F:oxidoreductase activity, acting on CH or CH2 groups, NAD or NADP as acceptor"/>
    <property type="evidence" value="ECO:0007669"/>
    <property type="project" value="UniProtKB-UniRule"/>
</dbReference>
<dbReference type="GO" id="GO:0019877">
    <property type="term" value="P:diaminopimelate biosynthetic process"/>
    <property type="evidence" value="ECO:0007669"/>
    <property type="project" value="UniProtKB-UniRule"/>
</dbReference>
<dbReference type="GO" id="GO:0009089">
    <property type="term" value="P:lysine biosynthetic process via diaminopimelate"/>
    <property type="evidence" value="ECO:0007669"/>
    <property type="project" value="UniProtKB-UniRule"/>
</dbReference>
<dbReference type="CDD" id="cd02274">
    <property type="entry name" value="DHDPR_N"/>
    <property type="match status" value="1"/>
</dbReference>
<dbReference type="FunFam" id="3.30.360.10:FF:000009">
    <property type="entry name" value="4-hydroxy-tetrahydrodipicolinate reductase"/>
    <property type="match status" value="1"/>
</dbReference>
<dbReference type="Gene3D" id="3.30.360.10">
    <property type="entry name" value="Dihydrodipicolinate Reductase, domain 2"/>
    <property type="match status" value="1"/>
</dbReference>
<dbReference type="Gene3D" id="3.40.50.720">
    <property type="entry name" value="NAD(P)-binding Rossmann-like Domain"/>
    <property type="match status" value="1"/>
</dbReference>
<dbReference type="HAMAP" id="MF_00102">
    <property type="entry name" value="DapB"/>
    <property type="match status" value="1"/>
</dbReference>
<dbReference type="InterPro" id="IPR022663">
    <property type="entry name" value="DapB_C"/>
</dbReference>
<dbReference type="InterPro" id="IPR000846">
    <property type="entry name" value="DapB_N"/>
</dbReference>
<dbReference type="InterPro" id="IPR022664">
    <property type="entry name" value="DapB_N_CS"/>
</dbReference>
<dbReference type="InterPro" id="IPR023940">
    <property type="entry name" value="DHDPR_bac"/>
</dbReference>
<dbReference type="InterPro" id="IPR036291">
    <property type="entry name" value="NAD(P)-bd_dom_sf"/>
</dbReference>
<dbReference type="NCBIfam" id="TIGR00036">
    <property type="entry name" value="dapB"/>
    <property type="match status" value="1"/>
</dbReference>
<dbReference type="PANTHER" id="PTHR20836:SF7">
    <property type="entry name" value="4-HYDROXY-TETRAHYDRODIPICOLINATE REDUCTASE"/>
    <property type="match status" value="1"/>
</dbReference>
<dbReference type="PANTHER" id="PTHR20836">
    <property type="entry name" value="DIHYDRODIPICOLINATE REDUCTASE"/>
    <property type="match status" value="1"/>
</dbReference>
<dbReference type="Pfam" id="PF05173">
    <property type="entry name" value="DapB_C"/>
    <property type="match status" value="1"/>
</dbReference>
<dbReference type="Pfam" id="PF01113">
    <property type="entry name" value="DapB_N"/>
    <property type="match status" value="1"/>
</dbReference>
<dbReference type="PIRSF" id="PIRSF000161">
    <property type="entry name" value="DHPR"/>
    <property type="match status" value="1"/>
</dbReference>
<dbReference type="SUPFAM" id="SSF55347">
    <property type="entry name" value="Glyceraldehyde-3-phosphate dehydrogenase-like, C-terminal domain"/>
    <property type="match status" value="1"/>
</dbReference>
<dbReference type="SUPFAM" id="SSF51735">
    <property type="entry name" value="NAD(P)-binding Rossmann-fold domains"/>
    <property type="match status" value="1"/>
</dbReference>
<dbReference type="PROSITE" id="PS01298">
    <property type="entry name" value="DAPB"/>
    <property type="match status" value="1"/>
</dbReference>
<sequence length="250" mass="27828">MIINIGLSGATGKMGRTILERIDNFKNCKISAKFNSTRDLHELNDLCKNSDVVIDFSTPEILEKLVDSALKYDTKLVIGTTGFTSSQFKLLEKAAKTLPILYSANMSIGANLLGYLAKEATKILDDYDIEILEAHHRAKKDAPSGTAIMLAEMVTAEKELDITFNRGNKTRRTNEIGISSLRGGNVHGTHEIFFLGDDETITLKHEALNKNSFADGAIRAAIWLQDKQTGLYSMLDFYKNLINYHLKKPI</sequence>
<comment type="function">
    <text evidence="1">Catalyzes the conversion of 4-hydroxy-tetrahydrodipicolinate (HTPA) to tetrahydrodipicolinate.</text>
</comment>
<comment type="catalytic activity">
    <reaction evidence="1">
        <text>(S)-2,3,4,5-tetrahydrodipicolinate + NAD(+) + H2O = (2S,4S)-4-hydroxy-2,3,4,5-tetrahydrodipicolinate + NADH + H(+)</text>
        <dbReference type="Rhea" id="RHEA:35323"/>
        <dbReference type="ChEBI" id="CHEBI:15377"/>
        <dbReference type="ChEBI" id="CHEBI:15378"/>
        <dbReference type="ChEBI" id="CHEBI:16845"/>
        <dbReference type="ChEBI" id="CHEBI:57540"/>
        <dbReference type="ChEBI" id="CHEBI:57945"/>
        <dbReference type="ChEBI" id="CHEBI:67139"/>
        <dbReference type="EC" id="1.17.1.8"/>
    </reaction>
</comment>
<comment type="catalytic activity">
    <reaction evidence="1">
        <text>(S)-2,3,4,5-tetrahydrodipicolinate + NADP(+) + H2O = (2S,4S)-4-hydroxy-2,3,4,5-tetrahydrodipicolinate + NADPH + H(+)</text>
        <dbReference type="Rhea" id="RHEA:35331"/>
        <dbReference type="ChEBI" id="CHEBI:15377"/>
        <dbReference type="ChEBI" id="CHEBI:15378"/>
        <dbReference type="ChEBI" id="CHEBI:16845"/>
        <dbReference type="ChEBI" id="CHEBI:57783"/>
        <dbReference type="ChEBI" id="CHEBI:58349"/>
        <dbReference type="ChEBI" id="CHEBI:67139"/>
        <dbReference type="EC" id="1.17.1.8"/>
    </reaction>
</comment>
<comment type="pathway">
    <text evidence="1">Amino-acid biosynthesis; L-lysine biosynthesis via DAP pathway; (S)-tetrahydrodipicolinate from L-aspartate: step 4/4.</text>
</comment>
<comment type="subcellular location">
    <subcellularLocation>
        <location evidence="1">Cytoplasm</location>
    </subcellularLocation>
</comment>
<comment type="similarity">
    <text evidence="1">Belongs to the DapB family.</text>
</comment>
<comment type="caution">
    <text evidence="2">Was originally thought to be a dihydrodipicolinate reductase (DHDPR), catalyzing the conversion of dihydrodipicolinate to tetrahydrodipicolinate. However, it was shown in E.coli that the substrate of the enzymatic reaction is not dihydrodipicolinate (DHDP) but in fact (2S,4S)-4-hydroxy-2,3,4,5-tetrahydrodipicolinic acid (HTPA), the product released by the DapA-catalyzed reaction.</text>
</comment>
<accession>A8GV42</accession>
<feature type="chain" id="PRO_1000008625" description="4-hydroxy-tetrahydrodipicolinate reductase">
    <location>
        <begin position="1"/>
        <end position="250"/>
    </location>
</feature>
<feature type="active site" description="Proton donor/acceptor" evidence="1">
    <location>
        <position position="135"/>
    </location>
</feature>
<feature type="active site" description="Proton donor" evidence="1">
    <location>
        <position position="139"/>
    </location>
</feature>
<feature type="binding site" evidence="1">
    <location>
        <begin position="9"/>
        <end position="14"/>
    </location>
    <ligand>
        <name>NAD(+)</name>
        <dbReference type="ChEBI" id="CHEBI:57540"/>
    </ligand>
</feature>
<feature type="binding site" evidence="1">
    <location>
        <begin position="79"/>
        <end position="81"/>
    </location>
    <ligand>
        <name>NAD(+)</name>
        <dbReference type="ChEBI" id="CHEBI:57540"/>
    </ligand>
</feature>
<feature type="binding site" evidence="1">
    <location>
        <begin position="103"/>
        <end position="106"/>
    </location>
    <ligand>
        <name>NAD(+)</name>
        <dbReference type="ChEBI" id="CHEBI:57540"/>
    </ligand>
</feature>
<feature type="binding site" evidence="1">
    <location>
        <position position="136"/>
    </location>
    <ligand>
        <name>(S)-2,3,4,5-tetrahydrodipicolinate</name>
        <dbReference type="ChEBI" id="CHEBI:16845"/>
    </ligand>
</feature>
<feature type="binding site" evidence="1">
    <location>
        <begin position="145"/>
        <end position="146"/>
    </location>
    <ligand>
        <name>(S)-2,3,4,5-tetrahydrodipicolinate</name>
        <dbReference type="ChEBI" id="CHEBI:16845"/>
    </ligand>
</feature>
<protein>
    <recommendedName>
        <fullName evidence="1">4-hydroxy-tetrahydrodipicolinate reductase</fullName>
        <shortName evidence="1">HTPA reductase</shortName>
        <ecNumber evidence="1">1.17.1.8</ecNumber>
    </recommendedName>
</protein>
<organism>
    <name type="scientific">Rickettsia bellii (strain OSU 85-389)</name>
    <dbReference type="NCBI Taxonomy" id="391896"/>
    <lineage>
        <taxon>Bacteria</taxon>
        <taxon>Pseudomonadati</taxon>
        <taxon>Pseudomonadota</taxon>
        <taxon>Alphaproteobacteria</taxon>
        <taxon>Rickettsiales</taxon>
        <taxon>Rickettsiaceae</taxon>
        <taxon>Rickettsieae</taxon>
        <taxon>Rickettsia</taxon>
        <taxon>belli group</taxon>
    </lineage>
</organism>
<keyword id="KW-0028">Amino-acid biosynthesis</keyword>
<keyword id="KW-0963">Cytoplasm</keyword>
<keyword id="KW-0220">Diaminopimelate biosynthesis</keyword>
<keyword id="KW-0457">Lysine biosynthesis</keyword>
<keyword id="KW-0520">NAD</keyword>
<keyword id="KW-0521">NADP</keyword>
<keyword id="KW-0560">Oxidoreductase</keyword>
<gene>
    <name evidence="1" type="primary">dapB</name>
    <name type="ordered locus">A1I_01615</name>
</gene>
<name>DAPB_RICB8</name>
<evidence type="ECO:0000255" key="1">
    <source>
        <dbReference type="HAMAP-Rule" id="MF_00102"/>
    </source>
</evidence>
<evidence type="ECO:0000305" key="2"/>
<proteinExistence type="inferred from homology"/>